<feature type="chain" id="PRO_1000212842" description="Protein SprT">
    <location>
        <begin position="1"/>
        <end position="164"/>
    </location>
</feature>
<feature type="domain" description="SprT-like" evidence="1">
    <location>
        <begin position="12"/>
        <end position="157"/>
    </location>
</feature>
<feature type="active site" evidence="1">
    <location>
        <position position="70"/>
    </location>
</feature>
<feature type="binding site" evidence="1">
    <location>
        <position position="69"/>
    </location>
    <ligand>
        <name>Zn(2+)</name>
        <dbReference type="ChEBI" id="CHEBI:29105"/>
    </ligand>
</feature>
<feature type="binding site" evidence="1">
    <location>
        <position position="73"/>
    </location>
    <ligand>
        <name>Zn(2+)</name>
        <dbReference type="ChEBI" id="CHEBI:29105"/>
    </ligand>
</feature>
<proteinExistence type="inferred from homology"/>
<name>SPRT_PSEFS</name>
<comment type="cofactor">
    <cofactor evidence="1">
        <name>Zn(2+)</name>
        <dbReference type="ChEBI" id="CHEBI:29105"/>
    </cofactor>
    <text evidence="1">Binds 1 zinc ion.</text>
</comment>
<comment type="subcellular location">
    <subcellularLocation>
        <location evidence="1">Cytoplasm</location>
    </subcellularLocation>
</comment>
<comment type="similarity">
    <text evidence="1">Belongs to the SprT family.</text>
</comment>
<organism>
    <name type="scientific">Pseudomonas fluorescens (strain SBW25)</name>
    <dbReference type="NCBI Taxonomy" id="216595"/>
    <lineage>
        <taxon>Bacteria</taxon>
        <taxon>Pseudomonadati</taxon>
        <taxon>Pseudomonadota</taxon>
        <taxon>Gammaproteobacteria</taxon>
        <taxon>Pseudomonadales</taxon>
        <taxon>Pseudomonadaceae</taxon>
        <taxon>Pseudomonas</taxon>
    </lineage>
</organism>
<protein>
    <recommendedName>
        <fullName evidence="1">Protein SprT</fullName>
    </recommendedName>
</protein>
<accession>C3JY45</accession>
<reference key="1">
    <citation type="journal article" date="2009" name="Genome Biol.">
        <title>Genomic and genetic analyses of diversity and plant interactions of Pseudomonas fluorescens.</title>
        <authorList>
            <person name="Silby M.W."/>
            <person name="Cerdeno-Tarraga A.M."/>
            <person name="Vernikos G.S."/>
            <person name="Giddens S.R."/>
            <person name="Jackson R.W."/>
            <person name="Preston G.M."/>
            <person name="Zhang X.-X."/>
            <person name="Moon C.D."/>
            <person name="Gehrig S.M."/>
            <person name="Godfrey S.A.C."/>
            <person name="Knight C.G."/>
            <person name="Malone J.G."/>
            <person name="Robinson Z."/>
            <person name="Spiers A.J."/>
            <person name="Harris S."/>
            <person name="Challis G.L."/>
            <person name="Yaxley A.M."/>
            <person name="Harris D."/>
            <person name="Seeger K."/>
            <person name="Murphy L."/>
            <person name="Rutter S."/>
            <person name="Squares R."/>
            <person name="Quail M.A."/>
            <person name="Saunders E."/>
            <person name="Mavromatis K."/>
            <person name="Brettin T.S."/>
            <person name="Bentley S.D."/>
            <person name="Hothersall J."/>
            <person name="Stephens E."/>
            <person name="Thomas C.M."/>
            <person name="Parkhill J."/>
            <person name="Levy S.B."/>
            <person name="Rainey P.B."/>
            <person name="Thomson N.R."/>
        </authorList>
    </citation>
    <scope>NUCLEOTIDE SEQUENCE [LARGE SCALE GENOMIC DNA]</scope>
    <source>
        <strain>SBW25</strain>
    </source>
</reference>
<dbReference type="EMBL" id="AM181176">
    <property type="protein sequence ID" value="CAY50085.1"/>
    <property type="molecule type" value="Genomic_DNA"/>
</dbReference>
<dbReference type="RefSeq" id="WP_010209629.1">
    <property type="nucleotide sequence ID" value="NC_012660.1"/>
</dbReference>
<dbReference type="STRING" id="294.SRM1_04180"/>
<dbReference type="eggNOG" id="COG3091">
    <property type="taxonomic scope" value="Bacteria"/>
</dbReference>
<dbReference type="HOGENOM" id="CLU_113336_0_1_6"/>
<dbReference type="OrthoDB" id="267364at2"/>
<dbReference type="GO" id="GO:0005737">
    <property type="term" value="C:cytoplasm"/>
    <property type="evidence" value="ECO:0007669"/>
    <property type="project" value="UniProtKB-SubCell"/>
</dbReference>
<dbReference type="GO" id="GO:0008270">
    <property type="term" value="F:zinc ion binding"/>
    <property type="evidence" value="ECO:0007669"/>
    <property type="project" value="UniProtKB-UniRule"/>
</dbReference>
<dbReference type="GO" id="GO:0006950">
    <property type="term" value="P:response to stress"/>
    <property type="evidence" value="ECO:0007669"/>
    <property type="project" value="UniProtKB-ARBA"/>
</dbReference>
<dbReference type="HAMAP" id="MF_00746">
    <property type="entry name" value="SprT"/>
    <property type="match status" value="1"/>
</dbReference>
<dbReference type="InterPro" id="IPR006640">
    <property type="entry name" value="SprT-like_domain"/>
</dbReference>
<dbReference type="InterPro" id="IPR023483">
    <property type="entry name" value="Uncharacterised_SprT"/>
</dbReference>
<dbReference type="NCBIfam" id="NF003421">
    <property type="entry name" value="PRK04860.1"/>
    <property type="match status" value="1"/>
</dbReference>
<dbReference type="PANTHER" id="PTHR38773">
    <property type="entry name" value="PROTEIN SPRT"/>
    <property type="match status" value="1"/>
</dbReference>
<dbReference type="PANTHER" id="PTHR38773:SF1">
    <property type="entry name" value="PROTEIN SPRT"/>
    <property type="match status" value="1"/>
</dbReference>
<dbReference type="Pfam" id="PF10263">
    <property type="entry name" value="SprT-like"/>
    <property type="match status" value="1"/>
</dbReference>
<dbReference type="SMART" id="SM00731">
    <property type="entry name" value="SprT"/>
    <property type="match status" value="1"/>
</dbReference>
<dbReference type="PROSITE" id="PS00142">
    <property type="entry name" value="ZINC_PROTEASE"/>
    <property type="match status" value="1"/>
</dbReference>
<sequence length="164" mass="19543">MPEQLNTRVEDCFLQAESFFKRSFKRPQVSLKLRGQKAGVAHLHENLLRFNPQLYRENSQHFLKQTVAHEVAHLIAHQLFGERIQPHGEEWQLIMRGVYELPPDRCHTYEVKRRQVTRYIYRCPCADSDFPFSSQRHGMVAQGRRYLCRRCRQTLVFTGETRVE</sequence>
<keyword id="KW-0963">Cytoplasm</keyword>
<keyword id="KW-0479">Metal-binding</keyword>
<keyword id="KW-0862">Zinc</keyword>
<evidence type="ECO:0000255" key="1">
    <source>
        <dbReference type="HAMAP-Rule" id="MF_00746"/>
    </source>
</evidence>
<gene>
    <name evidence="1" type="primary">sprT</name>
    <name type="ordered locus">PFLU_3788</name>
</gene>